<organism>
    <name type="scientific">Pseudomonas paraeruginosa (strain DSM 24068 / PA7)</name>
    <name type="common">Pseudomonas aeruginosa (strain PA7)</name>
    <dbReference type="NCBI Taxonomy" id="381754"/>
    <lineage>
        <taxon>Bacteria</taxon>
        <taxon>Pseudomonadati</taxon>
        <taxon>Pseudomonadota</taxon>
        <taxon>Gammaproteobacteria</taxon>
        <taxon>Pseudomonadales</taxon>
        <taxon>Pseudomonadaceae</taxon>
        <taxon>Pseudomonas</taxon>
        <taxon>Pseudomonas paraeruginosa</taxon>
    </lineage>
</organism>
<reference key="1">
    <citation type="submission" date="2007-06" db="EMBL/GenBank/DDBJ databases">
        <authorList>
            <person name="Dodson R.J."/>
            <person name="Harkins D."/>
            <person name="Paulsen I.T."/>
        </authorList>
    </citation>
    <scope>NUCLEOTIDE SEQUENCE [LARGE SCALE GENOMIC DNA]</scope>
    <source>
        <strain>DSM 24068 / PA7</strain>
    </source>
</reference>
<sequence length="436" mass="48548">MQVSVESTSALERRMTVGVPAERIETEVNKRLQQTARRAKIPGFRPGKVPMSVIRQRYEASARQEAMGDLIQETFYEAVVEQKLNPAGSPSVEPKSFEKGKDLEYIATFEVFPEFTVSGLEGIKIERLQAEVADADVDNMLDVLRKQNTRFEVVERAAQNDDQLNIDFVGKIDGEAFAGGSAKGTLLVLGSGRMIAGFEEGLVGAKAGEERVLNLTFPEDYQNLDLANKPAEFTVTVNSVAEPKLPELNEEFFALFGVKETGLDGFRAEVQKNMERELRQAIKSKVKNQVMEGLLQANPIEVPKALIGNEVNRLRVQAVQQFGGNIKPDQLPAELFEEQAKRRVVLGLIVAEVVKQHELKADEGRVREMIEEMASAYQEPEQVVAWYFKNEPQLNEVRSVVLEEQVVDTVLQKATVTDKQVSYEEAVKPAEAPQAA</sequence>
<gene>
    <name evidence="1" type="primary">tig</name>
    <name type="ordered locus">PSPA7_3497</name>
</gene>
<name>TIG_PSEP7</name>
<accession>A6V720</accession>
<dbReference type="EC" id="5.2.1.8" evidence="1"/>
<dbReference type="EMBL" id="CP000744">
    <property type="protein sequence ID" value="ABR81492.1"/>
    <property type="molecule type" value="Genomic_DNA"/>
</dbReference>
<dbReference type="RefSeq" id="WP_012076172.1">
    <property type="nucleotide sequence ID" value="NC_009656.1"/>
</dbReference>
<dbReference type="SMR" id="A6V720"/>
<dbReference type="KEGG" id="pap:PSPA7_3497"/>
<dbReference type="HOGENOM" id="CLU_033058_2_0_6"/>
<dbReference type="Proteomes" id="UP000001582">
    <property type="component" value="Chromosome"/>
</dbReference>
<dbReference type="GO" id="GO:0005737">
    <property type="term" value="C:cytoplasm"/>
    <property type="evidence" value="ECO:0007669"/>
    <property type="project" value="UniProtKB-SubCell"/>
</dbReference>
<dbReference type="GO" id="GO:0003755">
    <property type="term" value="F:peptidyl-prolyl cis-trans isomerase activity"/>
    <property type="evidence" value="ECO:0007669"/>
    <property type="project" value="UniProtKB-UniRule"/>
</dbReference>
<dbReference type="GO" id="GO:0044183">
    <property type="term" value="F:protein folding chaperone"/>
    <property type="evidence" value="ECO:0007669"/>
    <property type="project" value="TreeGrafter"/>
</dbReference>
<dbReference type="GO" id="GO:0043022">
    <property type="term" value="F:ribosome binding"/>
    <property type="evidence" value="ECO:0007669"/>
    <property type="project" value="TreeGrafter"/>
</dbReference>
<dbReference type="GO" id="GO:0051083">
    <property type="term" value="P:'de novo' cotranslational protein folding"/>
    <property type="evidence" value="ECO:0007669"/>
    <property type="project" value="TreeGrafter"/>
</dbReference>
<dbReference type="GO" id="GO:0051301">
    <property type="term" value="P:cell division"/>
    <property type="evidence" value="ECO:0007669"/>
    <property type="project" value="UniProtKB-KW"/>
</dbReference>
<dbReference type="GO" id="GO:0061077">
    <property type="term" value="P:chaperone-mediated protein folding"/>
    <property type="evidence" value="ECO:0007669"/>
    <property type="project" value="TreeGrafter"/>
</dbReference>
<dbReference type="GO" id="GO:0015031">
    <property type="term" value="P:protein transport"/>
    <property type="evidence" value="ECO:0007669"/>
    <property type="project" value="UniProtKB-UniRule"/>
</dbReference>
<dbReference type="GO" id="GO:0043335">
    <property type="term" value="P:protein unfolding"/>
    <property type="evidence" value="ECO:0007669"/>
    <property type="project" value="TreeGrafter"/>
</dbReference>
<dbReference type="FunFam" id="3.10.50.40:FF:000001">
    <property type="entry name" value="Trigger factor"/>
    <property type="match status" value="1"/>
</dbReference>
<dbReference type="FunFam" id="3.30.70.1050:FF:000001">
    <property type="entry name" value="Trigger factor"/>
    <property type="match status" value="1"/>
</dbReference>
<dbReference type="Gene3D" id="3.10.50.40">
    <property type="match status" value="1"/>
</dbReference>
<dbReference type="Gene3D" id="3.30.70.1050">
    <property type="entry name" value="Trigger factor ribosome-binding domain"/>
    <property type="match status" value="1"/>
</dbReference>
<dbReference type="Gene3D" id="1.10.3120.10">
    <property type="entry name" value="Trigger factor, C-terminal domain"/>
    <property type="match status" value="1"/>
</dbReference>
<dbReference type="HAMAP" id="MF_00303">
    <property type="entry name" value="Trigger_factor_Tig"/>
    <property type="match status" value="1"/>
</dbReference>
<dbReference type="InterPro" id="IPR046357">
    <property type="entry name" value="PPIase_dom_sf"/>
</dbReference>
<dbReference type="InterPro" id="IPR001179">
    <property type="entry name" value="PPIase_FKBP_dom"/>
</dbReference>
<dbReference type="InterPro" id="IPR005215">
    <property type="entry name" value="Trig_fac"/>
</dbReference>
<dbReference type="InterPro" id="IPR008880">
    <property type="entry name" value="Trigger_fac_C"/>
</dbReference>
<dbReference type="InterPro" id="IPR037041">
    <property type="entry name" value="Trigger_fac_C_sf"/>
</dbReference>
<dbReference type="InterPro" id="IPR008881">
    <property type="entry name" value="Trigger_fac_ribosome-bd_bac"/>
</dbReference>
<dbReference type="InterPro" id="IPR036611">
    <property type="entry name" value="Trigger_fac_ribosome-bd_sf"/>
</dbReference>
<dbReference type="InterPro" id="IPR027304">
    <property type="entry name" value="Trigger_fact/SurA_dom_sf"/>
</dbReference>
<dbReference type="NCBIfam" id="TIGR00115">
    <property type="entry name" value="tig"/>
    <property type="match status" value="1"/>
</dbReference>
<dbReference type="PANTHER" id="PTHR30560">
    <property type="entry name" value="TRIGGER FACTOR CHAPERONE AND PEPTIDYL-PROLYL CIS/TRANS ISOMERASE"/>
    <property type="match status" value="1"/>
</dbReference>
<dbReference type="PANTHER" id="PTHR30560:SF3">
    <property type="entry name" value="TRIGGER FACTOR-LIKE PROTEIN TIG, CHLOROPLASTIC"/>
    <property type="match status" value="1"/>
</dbReference>
<dbReference type="Pfam" id="PF00254">
    <property type="entry name" value="FKBP_C"/>
    <property type="match status" value="1"/>
</dbReference>
<dbReference type="Pfam" id="PF05698">
    <property type="entry name" value="Trigger_C"/>
    <property type="match status" value="1"/>
</dbReference>
<dbReference type="Pfam" id="PF05697">
    <property type="entry name" value="Trigger_N"/>
    <property type="match status" value="1"/>
</dbReference>
<dbReference type="PIRSF" id="PIRSF003095">
    <property type="entry name" value="Trigger_factor"/>
    <property type="match status" value="1"/>
</dbReference>
<dbReference type="SUPFAM" id="SSF54534">
    <property type="entry name" value="FKBP-like"/>
    <property type="match status" value="1"/>
</dbReference>
<dbReference type="SUPFAM" id="SSF109998">
    <property type="entry name" value="Triger factor/SurA peptide-binding domain-like"/>
    <property type="match status" value="1"/>
</dbReference>
<dbReference type="SUPFAM" id="SSF102735">
    <property type="entry name" value="Trigger factor ribosome-binding domain"/>
    <property type="match status" value="1"/>
</dbReference>
<dbReference type="PROSITE" id="PS50059">
    <property type="entry name" value="FKBP_PPIASE"/>
    <property type="match status" value="1"/>
</dbReference>
<evidence type="ECO:0000255" key="1">
    <source>
        <dbReference type="HAMAP-Rule" id="MF_00303"/>
    </source>
</evidence>
<proteinExistence type="inferred from homology"/>
<keyword id="KW-0131">Cell cycle</keyword>
<keyword id="KW-0132">Cell division</keyword>
<keyword id="KW-0143">Chaperone</keyword>
<keyword id="KW-0963">Cytoplasm</keyword>
<keyword id="KW-0413">Isomerase</keyword>
<keyword id="KW-0697">Rotamase</keyword>
<comment type="function">
    <text evidence="1">Involved in protein export. Acts as a chaperone by maintaining the newly synthesized protein in an open conformation. Functions as a peptidyl-prolyl cis-trans isomerase.</text>
</comment>
<comment type="catalytic activity">
    <reaction evidence="1">
        <text>[protein]-peptidylproline (omega=180) = [protein]-peptidylproline (omega=0)</text>
        <dbReference type="Rhea" id="RHEA:16237"/>
        <dbReference type="Rhea" id="RHEA-COMP:10747"/>
        <dbReference type="Rhea" id="RHEA-COMP:10748"/>
        <dbReference type="ChEBI" id="CHEBI:83833"/>
        <dbReference type="ChEBI" id="CHEBI:83834"/>
        <dbReference type="EC" id="5.2.1.8"/>
    </reaction>
</comment>
<comment type="subcellular location">
    <subcellularLocation>
        <location>Cytoplasm</location>
    </subcellularLocation>
    <text evidence="1">About half TF is bound to the ribosome near the polypeptide exit tunnel while the other half is free in the cytoplasm.</text>
</comment>
<comment type="domain">
    <text evidence="1">Consists of 3 domains; the N-terminus binds the ribosome, the middle domain has PPIase activity, while the C-terminus has intrinsic chaperone activity on its own.</text>
</comment>
<comment type="similarity">
    <text evidence="1">Belongs to the FKBP-type PPIase family. Tig subfamily.</text>
</comment>
<feature type="chain" id="PRO_1000022732" description="Trigger factor">
    <location>
        <begin position="1"/>
        <end position="436"/>
    </location>
</feature>
<feature type="domain" description="PPIase FKBP-type" evidence="1">
    <location>
        <begin position="161"/>
        <end position="246"/>
    </location>
</feature>
<protein>
    <recommendedName>
        <fullName evidence="1">Trigger factor</fullName>
        <shortName evidence="1">TF</shortName>
        <ecNumber evidence="1">5.2.1.8</ecNumber>
    </recommendedName>
    <alternativeName>
        <fullName evidence="1">PPIase</fullName>
    </alternativeName>
</protein>